<keyword id="KW-0119">Carbohydrate metabolism</keyword>
<keyword id="KW-0963">Cytoplasm</keyword>
<keyword id="KW-0378">Hydrolase</keyword>
<keyword id="KW-0460">Magnesium</keyword>
<keyword id="KW-0479">Metal-binding</keyword>
<accession>B0USR6</accession>
<protein>
    <recommendedName>
        <fullName evidence="1">Fructose-1,6-bisphosphatase class 1</fullName>
        <shortName evidence="1">FBPase class 1</shortName>
        <ecNumber evidence="1">3.1.3.11</ecNumber>
    </recommendedName>
    <alternativeName>
        <fullName evidence="1">D-fructose-1,6-bisphosphate 1-phosphohydrolase class 1</fullName>
    </alternativeName>
</protein>
<proteinExistence type="inferred from homology"/>
<gene>
    <name evidence="1" type="primary">fbp</name>
    <name type="ordered locus">HSM_0829</name>
</gene>
<evidence type="ECO:0000255" key="1">
    <source>
        <dbReference type="HAMAP-Rule" id="MF_01855"/>
    </source>
</evidence>
<sequence length="335" mass="37352">MKTLGQFIVEKQAEYPNAKGELSGILSSLRLVAKIIHRDINKAGLTNNIIGNSGVENVQGETQMKLDLFAHNTMKQALITREEVAGFASEEEENFVAFDTERGRNAKYVILTDPLDGSSNIDVNVAVGTIFSIYRRVSPIGTPVTLEDFLQPGHKQVAAGYIVYGSSTMLVYTTGNGVNGFTYDPSLGVFCLSHENIQIPPNGKIYSINEGQYLKFPMGVKKYIKYCQEKDKSTDRPYTSRYIGSLVSDFHRNMLKGGIYIYPSATTYPKGKLRLLYEGNPMAFLAEQAGGIASDGKDRILDIQPKELHERVPLFVGSREMVRKAEEFMREFSEE</sequence>
<reference key="1">
    <citation type="submission" date="2008-02" db="EMBL/GenBank/DDBJ databases">
        <title>Complete sequence of Haemophilus somnus 2336.</title>
        <authorList>
            <consortium name="US DOE Joint Genome Institute"/>
            <person name="Siddaramappa S."/>
            <person name="Duncan A.J."/>
            <person name="Challacombe J.F."/>
            <person name="Rainey D."/>
            <person name="Gillaspy A.F."/>
            <person name="Carson M."/>
            <person name="Gipson J."/>
            <person name="Gipson M."/>
            <person name="Bruce D."/>
            <person name="Detter J.C."/>
            <person name="Han C.S."/>
            <person name="Land M."/>
            <person name="Tapia R."/>
            <person name="Thompson L.S."/>
            <person name="Orvis J."/>
            <person name="Zaitshik J."/>
            <person name="Barnes G."/>
            <person name="Brettin T.S."/>
            <person name="Dyer D.W."/>
            <person name="Inzana T.J."/>
        </authorList>
    </citation>
    <scope>NUCLEOTIDE SEQUENCE [LARGE SCALE GENOMIC DNA]</scope>
    <source>
        <strain>2336</strain>
    </source>
</reference>
<dbReference type="EC" id="3.1.3.11" evidence="1"/>
<dbReference type="EMBL" id="CP000947">
    <property type="protein sequence ID" value="ACA32504.1"/>
    <property type="molecule type" value="Genomic_DNA"/>
</dbReference>
<dbReference type="RefSeq" id="WP_011609402.1">
    <property type="nucleotide sequence ID" value="NC_010519.1"/>
</dbReference>
<dbReference type="SMR" id="B0USR6"/>
<dbReference type="STRING" id="228400.HSM_0829"/>
<dbReference type="GeneID" id="31487118"/>
<dbReference type="KEGG" id="hsm:HSM_0829"/>
<dbReference type="HOGENOM" id="CLU_039977_2_2_6"/>
<dbReference type="UniPathway" id="UPA00138"/>
<dbReference type="GO" id="GO:0005829">
    <property type="term" value="C:cytosol"/>
    <property type="evidence" value="ECO:0007669"/>
    <property type="project" value="TreeGrafter"/>
</dbReference>
<dbReference type="GO" id="GO:0042132">
    <property type="term" value="F:fructose 1,6-bisphosphate 1-phosphatase activity"/>
    <property type="evidence" value="ECO:0007669"/>
    <property type="project" value="UniProtKB-UniRule"/>
</dbReference>
<dbReference type="GO" id="GO:0000287">
    <property type="term" value="F:magnesium ion binding"/>
    <property type="evidence" value="ECO:0007669"/>
    <property type="project" value="UniProtKB-UniRule"/>
</dbReference>
<dbReference type="GO" id="GO:0030388">
    <property type="term" value="P:fructose 1,6-bisphosphate metabolic process"/>
    <property type="evidence" value="ECO:0007669"/>
    <property type="project" value="TreeGrafter"/>
</dbReference>
<dbReference type="GO" id="GO:0006002">
    <property type="term" value="P:fructose 6-phosphate metabolic process"/>
    <property type="evidence" value="ECO:0007669"/>
    <property type="project" value="TreeGrafter"/>
</dbReference>
<dbReference type="GO" id="GO:0006000">
    <property type="term" value="P:fructose metabolic process"/>
    <property type="evidence" value="ECO:0007669"/>
    <property type="project" value="TreeGrafter"/>
</dbReference>
<dbReference type="GO" id="GO:0006094">
    <property type="term" value="P:gluconeogenesis"/>
    <property type="evidence" value="ECO:0007669"/>
    <property type="project" value="UniProtKB-UniRule"/>
</dbReference>
<dbReference type="GO" id="GO:0005986">
    <property type="term" value="P:sucrose biosynthetic process"/>
    <property type="evidence" value="ECO:0007669"/>
    <property type="project" value="TreeGrafter"/>
</dbReference>
<dbReference type="CDD" id="cd00354">
    <property type="entry name" value="FBPase"/>
    <property type="match status" value="1"/>
</dbReference>
<dbReference type="FunFam" id="3.30.540.10:FF:000002">
    <property type="entry name" value="Fructose-1,6-bisphosphatase class 1"/>
    <property type="match status" value="1"/>
</dbReference>
<dbReference type="FunFam" id="3.40.190.80:FF:000001">
    <property type="entry name" value="Fructose-1,6-bisphosphatase class 1"/>
    <property type="match status" value="1"/>
</dbReference>
<dbReference type="Gene3D" id="3.40.190.80">
    <property type="match status" value="1"/>
</dbReference>
<dbReference type="Gene3D" id="3.30.540.10">
    <property type="entry name" value="Fructose-1,6-Bisphosphatase, subunit A, domain 1"/>
    <property type="match status" value="1"/>
</dbReference>
<dbReference type="HAMAP" id="MF_01855">
    <property type="entry name" value="FBPase_class1"/>
    <property type="match status" value="1"/>
</dbReference>
<dbReference type="InterPro" id="IPR044015">
    <property type="entry name" value="FBPase_C_dom"/>
</dbReference>
<dbReference type="InterPro" id="IPR000146">
    <property type="entry name" value="FBPase_class-1"/>
</dbReference>
<dbReference type="InterPro" id="IPR033391">
    <property type="entry name" value="FBPase_N"/>
</dbReference>
<dbReference type="InterPro" id="IPR028343">
    <property type="entry name" value="FBPtase"/>
</dbReference>
<dbReference type="InterPro" id="IPR020548">
    <property type="entry name" value="Fructose_bisphosphatase_AS"/>
</dbReference>
<dbReference type="NCBIfam" id="NF006778">
    <property type="entry name" value="PRK09293.1-1"/>
    <property type="match status" value="1"/>
</dbReference>
<dbReference type="PANTHER" id="PTHR11556">
    <property type="entry name" value="FRUCTOSE-1,6-BISPHOSPHATASE-RELATED"/>
    <property type="match status" value="1"/>
</dbReference>
<dbReference type="PANTHER" id="PTHR11556:SF35">
    <property type="entry name" value="SEDOHEPTULOSE-1,7-BISPHOSPHATASE, CHLOROPLASTIC"/>
    <property type="match status" value="1"/>
</dbReference>
<dbReference type="Pfam" id="PF00316">
    <property type="entry name" value="FBPase"/>
    <property type="match status" value="1"/>
</dbReference>
<dbReference type="Pfam" id="PF18913">
    <property type="entry name" value="FBPase_C"/>
    <property type="match status" value="1"/>
</dbReference>
<dbReference type="PIRSF" id="PIRSF500210">
    <property type="entry name" value="FBPtase"/>
    <property type="match status" value="1"/>
</dbReference>
<dbReference type="PIRSF" id="PIRSF000904">
    <property type="entry name" value="FBPtase_SBPase"/>
    <property type="match status" value="1"/>
</dbReference>
<dbReference type="PRINTS" id="PR00115">
    <property type="entry name" value="F16BPHPHTASE"/>
</dbReference>
<dbReference type="SUPFAM" id="SSF56655">
    <property type="entry name" value="Carbohydrate phosphatase"/>
    <property type="match status" value="1"/>
</dbReference>
<dbReference type="PROSITE" id="PS00124">
    <property type="entry name" value="FBPASE"/>
    <property type="match status" value="1"/>
</dbReference>
<name>F16PA_HISS2</name>
<organism>
    <name type="scientific">Histophilus somni (strain 2336)</name>
    <name type="common">Haemophilus somnus</name>
    <dbReference type="NCBI Taxonomy" id="228400"/>
    <lineage>
        <taxon>Bacteria</taxon>
        <taxon>Pseudomonadati</taxon>
        <taxon>Pseudomonadota</taxon>
        <taxon>Gammaproteobacteria</taxon>
        <taxon>Pasteurellales</taxon>
        <taxon>Pasteurellaceae</taxon>
        <taxon>Histophilus</taxon>
    </lineage>
</organism>
<feature type="chain" id="PRO_0000364569" description="Fructose-1,6-bisphosphatase class 1">
    <location>
        <begin position="1"/>
        <end position="335"/>
    </location>
</feature>
<feature type="binding site" evidence="1">
    <location>
        <position position="90"/>
    </location>
    <ligand>
        <name>Mg(2+)</name>
        <dbReference type="ChEBI" id="CHEBI:18420"/>
        <label>1</label>
    </ligand>
</feature>
<feature type="binding site" evidence="1">
    <location>
        <position position="113"/>
    </location>
    <ligand>
        <name>Mg(2+)</name>
        <dbReference type="ChEBI" id="CHEBI:18420"/>
        <label>1</label>
    </ligand>
</feature>
<feature type="binding site" evidence="1">
    <location>
        <position position="113"/>
    </location>
    <ligand>
        <name>Mg(2+)</name>
        <dbReference type="ChEBI" id="CHEBI:18420"/>
        <label>2</label>
    </ligand>
</feature>
<feature type="binding site" evidence="1">
    <location>
        <position position="115"/>
    </location>
    <ligand>
        <name>Mg(2+)</name>
        <dbReference type="ChEBI" id="CHEBI:18420"/>
        <label>1</label>
    </ligand>
</feature>
<feature type="binding site" evidence="1">
    <location>
        <begin position="116"/>
        <end position="119"/>
    </location>
    <ligand>
        <name>substrate</name>
    </ligand>
</feature>
<feature type="binding site" evidence="1">
    <location>
        <position position="116"/>
    </location>
    <ligand>
        <name>Mg(2+)</name>
        <dbReference type="ChEBI" id="CHEBI:18420"/>
        <label>2</label>
    </ligand>
</feature>
<feature type="binding site" evidence="1">
    <location>
        <position position="209"/>
    </location>
    <ligand>
        <name>substrate</name>
    </ligand>
</feature>
<feature type="binding site" evidence="1">
    <location>
        <position position="242"/>
    </location>
    <ligand>
        <name>substrate</name>
    </ligand>
</feature>
<feature type="binding site" evidence="1">
    <location>
        <position position="272"/>
    </location>
    <ligand>
        <name>substrate</name>
    </ligand>
</feature>
<feature type="binding site" evidence="1">
    <location>
        <position position="278"/>
    </location>
    <ligand>
        <name>Mg(2+)</name>
        <dbReference type="ChEBI" id="CHEBI:18420"/>
        <label>2</label>
    </ligand>
</feature>
<comment type="catalytic activity">
    <reaction evidence="1">
        <text>beta-D-fructose 1,6-bisphosphate + H2O = beta-D-fructose 6-phosphate + phosphate</text>
        <dbReference type="Rhea" id="RHEA:11064"/>
        <dbReference type="ChEBI" id="CHEBI:15377"/>
        <dbReference type="ChEBI" id="CHEBI:32966"/>
        <dbReference type="ChEBI" id="CHEBI:43474"/>
        <dbReference type="ChEBI" id="CHEBI:57634"/>
        <dbReference type="EC" id="3.1.3.11"/>
    </reaction>
</comment>
<comment type="cofactor">
    <cofactor evidence="1">
        <name>Mg(2+)</name>
        <dbReference type="ChEBI" id="CHEBI:18420"/>
    </cofactor>
    <text evidence="1">Binds 2 magnesium ions per subunit.</text>
</comment>
<comment type="pathway">
    <text evidence="1">Carbohydrate biosynthesis; gluconeogenesis.</text>
</comment>
<comment type="subunit">
    <text evidence="1">Homotetramer.</text>
</comment>
<comment type="subcellular location">
    <subcellularLocation>
        <location evidence="1">Cytoplasm</location>
    </subcellularLocation>
</comment>
<comment type="similarity">
    <text evidence="1">Belongs to the FBPase class 1 family.</text>
</comment>